<dbReference type="EMBL" id="CP000970">
    <property type="protein sequence ID" value="ACB18982.1"/>
    <property type="molecule type" value="Genomic_DNA"/>
</dbReference>
<dbReference type="RefSeq" id="WP_000301864.1">
    <property type="nucleotide sequence ID" value="NC_010498.1"/>
</dbReference>
<dbReference type="SMR" id="B1LHD1"/>
<dbReference type="GeneID" id="93778670"/>
<dbReference type="KEGG" id="ecm:EcSMS35_3612"/>
<dbReference type="HOGENOM" id="CLU_036235_2_1_6"/>
<dbReference type="Proteomes" id="UP000007011">
    <property type="component" value="Chromosome"/>
</dbReference>
<dbReference type="GO" id="GO:0005829">
    <property type="term" value="C:cytosol"/>
    <property type="evidence" value="ECO:0007669"/>
    <property type="project" value="UniProtKB-ARBA"/>
</dbReference>
<dbReference type="GO" id="GO:0015934">
    <property type="term" value="C:large ribosomal subunit"/>
    <property type="evidence" value="ECO:0007669"/>
    <property type="project" value="InterPro"/>
</dbReference>
<dbReference type="GO" id="GO:0019843">
    <property type="term" value="F:rRNA binding"/>
    <property type="evidence" value="ECO:0007669"/>
    <property type="project" value="UniProtKB-UniRule"/>
</dbReference>
<dbReference type="GO" id="GO:0003735">
    <property type="term" value="F:structural constituent of ribosome"/>
    <property type="evidence" value="ECO:0007669"/>
    <property type="project" value="InterPro"/>
</dbReference>
<dbReference type="GO" id="GO:0016740">
    <property type="term" value="F:transferase activity"/>
    <property type="evidence" value="ECO:0007669"/>
    <property type="project" value="InterPro"/>
</dbReference>
<dbReference type="GO" id="GO:0002181">
    <property type="term" value="P:cytoplasmic translation"/>
    <property type="evidence" value="ECO:0007669"/>
    <property type="project" value="TreeGrafter"/>
</dbReference>
<dbReference type="FunFam" id="2.30.30.30:FF:000001">
    <property type="entry name" value="50S ribosomal protein L2"/>
    <property type="match status" value="1"/>
</dbReference>
<dbReference type="FunFam" id="2.40.50.140:FF:000003">
    <property type="entry name" value="50S ribosomal protein L2"/>
    <property type="match status" value="1"/>
</dbReference>
<dbReference type="FunFam" id="4.10.950.10:FF:000001">
    <property type="entry name" value="50S ribosomal protein L2"/>
    <property type="match status" value="1"/>
</dbReference>
<dbReference type="Gene3D" id="2.30.30.30">
    <property type="match status" value="1"/>
</dbReference>
<dbReference type="Gene3D" id="2.40.50.140">
    <property type="entry name" value="Nucleic acid-binding proteins"/>
    <property type="match status" value="1"/>
</dbReference>
<dbReference type="Gene3D" id="4.10.950.10">
    <property type="entry name" value="Ribosomal protein L2, domain 3"/>
    <property type="match status" value="1"/>
</dbReference>
<dbReference type="HAMAP" id="MF_01320_B">
    <property type="entry name" value="Ribosomal_uL2_B"/>
    <property type="match status" value="1"/>
</dbReference>
<dbReference type="InterPro" id="IPR012340">
    <property type="entry name" value="NA-bd_OB-fold"/>
</dbReference>
<dbReference type="InterPro" id="IPR014722">
    <property type="entry name" value="Rib_uL2_dom2"/>
</dbReference>
<dbReference type="InterPro" id="IPR002171">
    <property type="entry name" value="Ribosomal_uL2"/>
</dbReference>
<dbReference type="InterPro" id="IPR005880">
    <property type="entry name" value="Ribosomal_uL2_bac/org-type"/>
</dbReference>
<dbReference type="InterPro" id="IPR022669">
    <property type="entry name" value="Ribosomal_uL2_C"/>
</dbReference>
<dbReference type="InterPro" id="IPR022671">
    <property type="entry name" value="Ribosomal_uL2_CS"/>
</dbReference>
<dbReference type="InterPro" id="IPR014726">
    <property type="entry name" value="Ribosomal_uL2_dom3"/>
</dbReference>
<dbReference type="InterPro" id="IPR022666">
    <property type="entry name" value="Ribosomal_uL2_RNA-bd_dom"/>
</dbReference>
<dbReference type="InterPro" id="IPR008991">
    <property type="entry name" value="Translation_prot_SH3-like_sf"/>
</dbReference>
<dbReference type="NCBIfam" id="TIGR01171">
    <property type="entry name" value="rplB_bact"/>
    <property type="match status" value="1"/>
</dbReference>
<dbReference type="PANTHER" id="PTHR13691:SF5">
    <property type="entry name" value="LARGE RIBOSOMAL SUBUNIT PROTEIN UL2M"/>
    <property type="match status" value="1"/>
</dbReference>
<dbReference type="PANTHER" id="PTHR13691">
    <property type="entry name" value="RIBOSOMAL PROTEIN L2"/>
    <property type="match status" value="1"/>
</dbReference>
<dbReference type="Pfam" id="PF00181">
    <property type="entry name" value="Ribosomal_L2"/>
    <property type="match status" value="1"/>
</dbReference>
<dbReference type="Pfam" id="PF03947">
    <property type="entry name" value="Ribosomal_L2_C"/>
    <property type="match status" value="1"/>
</dbReference>
<dbReference type="PIRSF" id="PIRSF002158">
    <property type="entry name" value="Ribosomal_L2"/>
    <property type="match status" value="1"/>
</dbReference>
<dbReference type="SMART" id="SM01383">
    <property type="entry name" value="Ribosomal_L2"/>
    <property type="match status" value="1"/>
</dbReference>
<dbReference type="SMART" id="SM01382">
    <property type="entry name" value="Ribosomal_L2_C"/>
    <property type="match status" value="1"/>
</dbReference>
<dbReference type="SUPFAM" id="SSF50249">
    <property type="entry name" value="Nucleic acid-binding proteins"/>
    <property type="match status" value="1"/>
</dbReference>
<dbReference type="SUPFAM" id="SSF50104">
    <property type="entry name" value="Translation proteins SH3-like domain"/>
    <property type="match status" value="1"/>
</dbReference>
<dbReference type="PROSITE" id="PS00467">
    <property type="entry name" value="RIBOSOMAL_L2"/>
    <property type="match status" value="1"/>
</dbReference>
<name>RL2_ECOSM</name>
<reference key="1">
    <citation type="journal article" date="2008" name="J. Bacteriol.">
        <title>Insights into the environmental resistance gene pool from the genome sequence of the multidrug-resistant environmental isolate Escherichia coli SMS-3-5.</title>
        <authorList>
            <person name="Fricke W.F."/>
            <person name="Wright M.S."/>
            <person name="Lindell A.H."/>
            <person name="Harkins D.M."/>
            <person name="Baker-Austin C."/>
            <person name="Ravel J."/>
            <person name="Stepanauskas R."/>
        </authorList>
    </citation>
    <scope>NUCLEOTIDE SEQUENCE [LARGE SCALE GENOMIC DNA]</scope>
    <source>
        <strain>SMS-3-5 / SECEC</strain>
    </source>
</reference>
<comment type="function">
    <text evidence="1">One of the primary rRNA binding proteins. Required for association of the 30S and 50S subunits to form the 70S ribosome, for tRNA binding and peptide bond formation. It has been suggested to have peptidyltransferase activity; this is somewhat controversial. Makes several contacts with the 16S rRNA in the 70S ribosome.</text>
</comment>
<comment type="subunit">
    <text evidence="1">Part of the 50S ribosomal subunit. Forms a bridge to the 30S subunit in the 70S ribosome.</text>
</comment>
<comment type="similarity">
    <text evidence="1">Belongs to the universal ribosomal protein uL2 family.</text>
</comment>
<sequence>MAVVKCKPTSPGRRHVVKVVNPELHKGKPFAPLLEKNSKSGGRNNNGRITTRHIGGGHKQAYRIVDFKRNKDGIPAVVERLEYDPNRSANIALVLYKDGERRYILAPKGLKAGDQIQSGVDAAIKPGNTLPMRNIPVGSTVHNVEMKPGKGGQLARSAGTYVQIVARDGAYVTLRLRSGEMRKVEADCRATLGEVGNAEHMLRVLGKAGAARWRGVRPTVRGTAMNPVDHPHGGGEGRNFGKHPVTPWGVQTKGKKTRSNKRTDKFIVRRRSK</sequence>
<feature type="chain" id="PRO_1000141550" description="Large ribosomal subunit protein uL2">
    <location>
        <begin position="1"/>
        <end position="273"/>
    </location>
</feature>
<feature type="region of interest" description="Disordered" evidence="2">
    <location>
        <begin position="28"/>
        <end position="53"/>
    </location>
</feature>
<feature type="region of interest" description="Disordered" evidence="2">
    <location>
        <begin position="221"/>
        <end position="273"/>
    </location>
</feature>
<feature type="compositionally biased region" description="Low complexity" evidence="2">
    <location>
        <begin position="39"/>
        <end position="48"/>
    </location>
</feature>
<feature type="modified residue" description="N6-acetyllysine" evidence="1">
    <location>
        <position position="242"/>
    </location>
</feature>
<evidence type="ECO:0000255" key="1">
    <source>
        <dbReference type="HAMAP-Rule" id="MF_01320"/>
    </source>
</evidence>
<evidence type="ECO:0000256" key="2">
    <source>
        <dbReference type="SAM" id="MobiDB-lite"/>
    </source>
</evidence>
<evidence type="ECO:0000305" key="3"/>
<keyword id="KW-0007">Acetylation</keyword>
<keyword id="KW-0687">Ribonucleoprotein</keyword>
<keyword id="KW-0689">Ribosomal protein</keyword>
<keyword id="KW-0694">RNA-binding</keyword>
<keyword id="KW-0699">rRNA-binding</keyword>
<proteinExistence type="inferred from homology"/>
<accession>B1LHD1</accession>
<gene>
    <name evidence="1" type="primary">rplB</name>
    <name type="ordered locus">EcSMS35_3612</name>
</gene>
<organism>
    <name type="scientific">Escherichia coli (strain SMS-3-5 / SECEC)</name>
    <dbReference type="NCBI Taxonomy" id="439855"/>
    <lineage>
        <taxon>Bacteria</taxon>
        <taxon>Pseudomonadati</taxon>
        <taxon>Pseudomonadota</taxon>
        <taxon>Gammaproteobacteria</taxon>
        <taxon>Enterobacterales</taxon>
        <taxon>Enterobacteriaceae</taxon>
        <taxon>Escherichia</taxon>
    </lineage>
</organism>
<protein>
    <recommendedName>
        <fullName evidence="1">Large ribosomal subunit protein uL2</fullName>
    </recommendedName>
    <alternativeName>
        <fullName evidence="3">50S ribosomal protein L2</fullName>
    </alternativeName>
</protein>